<proteinExistence type="evidence at transcript level"/>
<organism>
    <name type="scientific">Rattus norvegicus</name>
    <name type="common">Rat</name>
    <dbReference type="NCBI Taxonomy" id="10116"/>
    <lineage>
        <taxon>Eukaryota</taxon>
        <taxon>Metazoa</taxon>
        <taxon>Chordata</taxon>
        <taxon>Craniata</taxon>
        <taxon>Vertebrata</taxon>
        <taxon>Euteleostomi</taxon>
        <taxon>Mammalia</taxon>
        <taxon>Eutheria</taxon>
        <taxon>Euarchontoglires</taxon>
        <taxon>Glires</taxon>
        <taxon>Rodentia</taxon>
        <taxon>Myomorpha</taxon>
        <taxon>Muroidea</taxon>
        <taxon>Muridae</taxon>
        <taxon>Murinae</taxon>
        <taxon>Rattus</taxon>
    </lineage>
</organism>
<accession>Q8K4F8</accession>
<accession>D3ZCW7</accession>
<keyword id="KW-0131">Cell cycle</keyword>
<keyword id="KW-0132">Cell division</keyword>
<keyword id="KW-0195">Cyclin</keyword>
<keyword id="KW-0963">Cytoplasm</keyword>
<keyword id="KW-0206">Cytoskeleton</keyword>
<keyword id="KW-0498">Mitosis</keyword>
<keyword id="KW-0539">Nucleus</keyword>
<keyword id="KW-0597">Phosphoprotein</keyword>
<keyword id="KW-1185">Reference proteome</keyword>
<keyword id="KW-0832">Ubl conjugation</keyword>
<keyword id="KW-0833">Ubl conjugation pathway</keyword>
<protein>
    <recommendedName>
        <fullName>Cyclin-F</fullName>
    </recommendedName>
</protein>
<comment type="function">
    <text evidence="1">Substrate recognition component of a SCF (SKP1-CUL1-F-box protein) E3 ubiquitin-protein ligase complex which mediates the ubiquitination and subsequent proteasomal degradation of target proteins (By similarity). The SCF(CCNF) E3 ubiquitin-protein ligase complex is an integral component of the ubiquitin proteasome system (UPS) and links proteasome degradation to the cell cycle (By similarity). Mediates the substrate recognition and the proteasomal degradation of various target proteins involved in the regulation of cell cycle progression and in the maintenance of genome stability (By similarity). Mediates the ubiquitination and subsequent proteasomal degradation of CP110 during G2 phase, thereby acting as an inhibitor of centrosome reduplication (By similarity). In G2, mediates the ubiquitination and proteasomal degradation of CDC6, thereby suppressing DNA re-replication and preventing genome instability (By similarity). Involved in the ubiquitination and degradation of the substrate adapter CDH1 of the anaphase-promoting complex (APC/C), thereby acting as an antagonist of APC/C in regulating G1 progression and S phase entry (By similarity). May play a role in the G2 cell cycle checkpoint control after DNA damage, possibly by promoting the ubiquitination of MYBL2/BMYB (By similarity).</text>
</comment>
<comment type="subunit">
    <text evidence="1">Component of the SCF(CCNF) complex consisting of CUL1, RBX1, SKP1 and CCNF (By similarity). Interacts with SKP1 (By similarity). Interacts with CUL1 (By similarity). Interacts with CCNB1; interaction is required for nuclear localization of CCNB1 (By similarity). Interacts with CCP110; this interaction leads to CCP110 ubiquitination and degradation via the proteasome pathway (By similarity). Interacts (via the Cyclin N-terminal domain) with MYBL2/BMYB (By similarity). Interacts with FZR1/CDH1 (via N-terminus) (By similarity). Interacts with RRM2 (via Cy motif and when phosphorylated at 'Thr-33'); the interaction occurs exclusively in G2 and early M (By similarity). Interacts with CDC6 (via Cy motif); the interaction takes place during G2 and M phase (By similarity).</text>
</comment>
<comment type="subcellular location">
    <subcellularLocation>
        <location evidence="1">Nucleus</location>
    </subcellularLocation>
    <subcellularLocation>
        <location evidence="1">Cytoplasm</location>
        <location evidence="1">Perinuclear region</location>
    </subcellularLocation>
    <subcellularLocation>
        <location evidence="1">Cytoplasm</location>
        <location evidence="1">Cytoskeleton</location>
        <location evidence="1">Microtubule organizing center</location>
        <location evidence="1">Centrosome</location>
        <location evidence="1">Centriole</location>
    </subcellularLocation>
    <text evidence="1">Localization in the centrosome is rare in S phase cells and increases in G2 cells, Localizes on both the mother and daughter centrioles. Localization to centrosomes is not dependent on CP110. Localizes to the nucleus in G2 phase.</text>
</comment>
<comment type="domain">
    <text evidence="1">The nuclear localization signals mediate the localization to the nucleus and are required for CCNB1 localization to the nucleus.</text>
</comment>
<comment type="domain">
    <text evidence="1">The D box motifs 1-4 (amino acid sequence RxxL) are involved in substrate binding, such as FZR1/CDH1, and may be ubiquitinated.</text>
</comment>
<comment type="PTM">
    <text evidence="1">Degraded when the spindle assembly checkpoint is activated during the G2-M transition. Degradation is not dependent on the proteasome or ubiquitin and depends on the C-terminal PEST sequence.</text>
</comment>
<comment type="PTM">
    <text evidence="1">Phosphorylated just before cells enter into mitosis.</text>
</comment>
<comment type="PTM">
    <text evidence="1">Ubiquitinated by the anaphase-promoting complex (APC/C); leading to its degradation by the proteasome.</text>
</comment>
<comment type="similarity">
    <text evidence="5">Belongs to the cyclin family. Cyclin AB subfamily.</text>
</comment>
<sequence>MGSGGVIHCRCAKCFCYPTKRRIKRRPRNLTILSLPEDVLFHILKWLSVGDILAVRAVHSHLKYLVDNHASVWASASFQELWPSPQNLKLFERAAEKGNFEAAVKLGIAYLYNEGLSVSDEACAEVNGLKASRFFSMAERLNTGSDPFIWLFIRPPWSVSGSCCKAVVHDSLRAECQLQRSHKASILHCLGRVLNLFEDEEKRKQAHNLFEESAHQGCLASSYLLWESDRKVDMSDPGRCLHSFRKLRDYAAKGCWEAQLALAKACAGGSQLGLEGKACSESVCQLFQASQAVNKQQIFSVQKGLSDTMRYILIDWLVEVATMKDFTSLCLHLTVECVDRYLRRRLVPRYKLQLLGIACMVICTRFISKEILTIREAVWLTDNTYKYEDLVRVMGEIISALEGKIRIPTVVDYKEVLLTLVPVAPRTQHLCSFLCELTLLHTSLSVYAPARLASAALLLARLMHGHTQPWTTQLWDLTGFSYSDLTPCVLSLHKKCFHDDAPKDYRQVSLTAVKQRFEDKCYEEISQEEVLSYAELCSALGVKQESPEPPSFPSSGEIHTFLSSPSGRRSKRKRENSLQEDRGSFVTTPTAELSNQEETLLGSLLDWSLDCCSGYEGDQESEGEKEGDVTAPSGLLDVTVVYLNPEEHCCQESSDEEVWPEDKSHPTPGTQAPPASAPWPLPCNRGDPGKDVTTSGYSSVSSSSPISSLDGGMVGSPRSTSVLSVGSHSSTKPCYHQAKKSCLQCRPPNPPESGAHQQPVKRQNLSVHSDEDTNLGFLKL</sequence>
<gene>
    <name type="primary">Ccnf</name>
</gene>
<evidence type="ECO:0000250" key="1">
    <source>
        <dbReference type="UniProtKB" id="P41002"/>
    </source>
</evidence>
<evidence type="ECO:0000255" key="2"/>
<evidence type="ECO:0000255" key="3">
    <source>
        <dbReference type="PROSITE-ProRule" id="PRU00080"/>
    </source>
</evidence>
<evidence type="ECO:0000256" key="4">
    <source>
        <dbReference type="SAM" id="MobiDB-lite"/>
    </source>
</evidence>
<evidence type="ECO:0000305" key="5"/>
<feature type="chain" id="PRO_0000398635" description="Cyclin-F">
    <location>
        <begin position="1"/>
        <end position="780"/>
    </location>
</feature>
<feature type="domain" description="F-box" evidence="3">
    <location>
        <begin position="29"/>
        <end position="76"/>
    </location>
</feature>
<feature type="domain" description="Cyclin N-terminal" evidence="2">
    <location>
        <begin position="288"/>
        <end position="405"/>
    </location>
</feature>
<feature type="region of interest" description="Disordered" evidence="4">
    <location>
        <begin position="544"/>
        <end position="594"/>
    </location>
</feature>
<feature type="region of interest" description="PEST">
    <location>
        <begin position="582"/>
        <end position="761"/>
    </location>
</feature>
<feature type="region of interest" description="Disordered" evidence="4">
    <location>
        <begin position="651"/>
        <end position="733"/>
    </location>
</feature>
<feature type="region of interest" description="Disordered" evidence="4">
    <location>
        <begin position="745"/>
        <end position="780"/>
    </location>
</feature>
<feature type="short sequence motif" description="Nuclear localization signal 1" evidence="1">
    <location>
        <begin position="20"/>
        <end position="28"/>
    </location>
</feature>
<feature type="short sequence motif" description="D box 1" evidence="1">
    <location>
        <begin position="310"/>
        <end position="313"/>
    </location>
</feature>
<feature type="short sequence motif" description="D box 2" evidence="1">
    <location>
        <begin position="343"/>
        <end position="346"/>
    </location>
</feature>
<feature type="short sequence motif" description="D box 3" evidence="1">
    <location>
        <begin position="349"/>
        <end position="352"/>
    </location>
</feature>
<feature type="short sequence motif" description="Nuclear localization signal 2" evidence="1">
    <location>
        <begin position="568"/>
        <end position="574"/>
    </location>
</feature>
<feature type="short sequence motif" description="D box 4" evidence="1">
    <location>
        <begin position="762"/>
        <end position="765"/>
    </location>
</feature>
<feature type="compositionally biased region" description="Polar residues" evidence="4">
    <location>
        <begin position="585"/>
        <end position="594"/>
    </location>
</feature>
<feature type="compositionally biased region" description="Low complexity" evidence="4">
    <location>
        <begin position="695"/>
        <end position="708"/>
    </location>
</feature>
<feature type="compositionally biased region" description="Low complexity" evidence="4">
    <location>
        <begin position="719"/>
        <end position="731"/>
    </location>
</feature>
<dbReference type="EMBL" id="AF410816">
    <property type="protein sequence ID" value="AAM46626.1"/>
    <property type="molecule type" value="mRNA"/>
</dbReference>
<dbReference type="RefSeq" id="NP_001093944.1">
    <property type="nucleotide sequence ID" value="NM_001100474.1"/>
</dbReference>
<dbReference type="SMR" id="Q8K4F8"/>
<dbReference type="FunCoup" id="Q8K4F8">
    <property type="interactions" value="994"/>
</dbReference>
<dbReference type="STRING" id="10116.ENSRNOP00000060445"/>
<dbReference type="GlyGen" id="Q8K4F8">
    <property type="glycosylation" value="1 site"/>
</dbReference>
<dbReference type="iPTMnet" id="Q8K4F8"/>
<dbReference type="PhosphoSitePlus" id="Q8K4F8"/>
<dbReference type="PaxDb" id="10116-ENSRNOP00000060445"/>
<dbReference type="Ensembl" id="ENSRNOT00000064392.2">
    <property type="protein sequence ID" value="ENSRNOP00000060445.1"/>
    <property type="gene ID" value="ENSRNOG00000007483.7"/>
</dbReference>
<dbReference type="GeneID" id="117524"/>
<dbReference type="KEGG" id="rno:117524"/>
<dbReference type="UCSC" id="RGD:67401">
    <property type="organism name" value="rat"/>
</dbReference>
<dbReference type="AGR" id="RGD:67401"/>
<dbReference type="CTD" id="899"/>
<dbReference type="RGD" id="67401">
    <property type="gene designation" value="Ccnf"/>
</dbReference>
<dbReference type="eggNOG" id="KOG0654">
    <property type="taxonomic scope" value="Eukaryota"/>
</dbReference>
<dbReference type="GeneTree" id="ENSGT00810000125541"/>
<dbReference type="HOGENOM" id="CLU_020348_0_0_1"/>
<dbReference type="InParanoid" id="Q8K4F8"/>
<dbReference type="OMA" id="HQAKKSC"/>
<dbReference type="OrthoDB" id="5590282at2759"/>
<dbReference type="PhylomeDB" id="Q8K4F8"/>
<dbReference type="Reactome" id="R-RNO-8951664">
    <property type="pathway name" value="Neddylation"/>
</dbReference>
<dbReference type="Reactome" id="R-RNO-983168">
    <property type="pathway name" value="Antigen processing: Ubiquitination &amp; Proteasome degradation"/>
</dbReference>
<dbReference type="PRO" id="PR:Q8K4F8"/>
<dbReference type="Proteomes" id="UP000002494">
    <property type="component" value="Chromosome 10"/>
</dbReference>
<dbReference type="Bgee" id="ENSRNOG00000007483">
    <property type="expression patterns" value="Expressed in thymus and 19 other cell types or tissues"/>
</dbReference>
<dbReference type="GO" id="GO:0005814">
    <property type="term" value="C:centriole"/>
    <property type="evidence" value="ECO:0000250"/>
    <property type="project" value="UniProtKB"/>
</dbReference>
<dbReference type="GO" id="GO:0000307">
    <property type="term" value="C:cyclin-dependent protein kinase holoenzyme complex"/>
    <property type="evidence" value="ECO:0000318"/>
    <property type="project" value="GO_Central"/>
</dbReference>
<dbReference type="GO" id="GO:0005737">
    <property type="term" value="C:cytoplasm"/>
    <property type="evidence" value="ECO:0000318"/>
    <property type="project" value="GO_Central"/>
</dbReference>
<dbReference type="GO" id="GO:0005815">
    <property type="term" value="C:microtubule organizing center"/>
    <property type="evidence" value="ECO:0000318"/>
    <property type="project" value="GO_Central"/>
</dbReference>
<dbReference type="GO" id="GO:0005634">
    <property type="term" value="C:nucleus"/>
    <property type="evidence" value="ECO:0000250"/>
    <property type="project" value="UniProtKB"/>
</dbReference>
<dbReference type="GO" id="GO:0048471">
    <property type="term" value="C:perinuclear region of cytoplasm"/>
    <property type="evidence" value="ECO:0007669"/>
    <property type="project" value="UniProtKB-SubCell"/>
</dbReference>
<dbReference type="GO" id="GO:0019005">
    <property type="term" value="C:SCF ubiquitin ligase complex"/>
    <property type="evidence" value="ECO:0000250"/>
    <property type="project" value="UniProtKB"/>
</dbReference>
<dbReference type="GO" id="GO:0010997">
    <property type="term" value="F:anaphase-promoting complex binding"/>
    <property type="evidence" value="ECO:0000266"/>
    <property type="project" value="RGD"/>
</dbReference>
<dbReference type="GO" id="GO:0016538">
    <property type="term" value="F:cyclin-dependent protein serine/threonine kinase regulator activity"/>
    <property type="evidence" value="ECO:0000318"/>
    <property type="project" value="GO_Central"/>
</dbReference>
<dbReference type="GO" id="GO:0019901">
    <property type="term" value="F:protein kinase binding"/>
    <property type="evidence" value="ECO:0007669"/>
    <property type="project" value="UniProtKB-ARBA"/>
</dbReference>
<dbReference type="GO" id="GO:0051301">
    <property type="term" value="P:cell division"/>
    <property type="evidence" value="ECO:0007669"/>
    <property type="project" value="UniProtKB-KW"/>
</dbReference>
<dbReference type="GO" id="GO:0000082">
    <property type="term" value="P:G1/S transition of mitotic cell cycle"/>
    <property type="evidence" value="ECO:0000318"/>
    <property type="project" value="GO_Central"/>
</dbReference>
<dbReference type="GO" id="GO:0010826">
    <property type="term" value="P:negative regulation of centrosome duplication"/>
    <property type="evidence" value="ECO:0000250"/>
    <property type="project" value="UniProtKB"/>
</dbReference>
<dbReference type="GO" id="GO:0001890">
    <property type="term" value="P:placenta development"/>
    <property type="evidence" value="ECO:0000266"/>
    <property type="project" value="RGD"/>
</dbReference>
<dbReference type="GO" id="GO:0016567">
    <property type="term" value="P:protein ubiquitination"/>
    <property type="evidence" value="ECO:0000250"/>
    <property type="project" value="UniProtKB"/>
</dbReference>
<dbReference type="GO" id="GO:0000320">
    <property type="term" value="P:re-entry into mitotic cell cycle"/>
    <property type="evidence" value="ECO:0000266"/>
    <property type="project" value="RGD"/>
</dbReference>
<dbReference type="GO" id="GO:0051726">
    <property type="term" value="P:regulation of cell cycle"/>
    <property type="evidence" value="ECO:0000250"/>
    <property type="project" value="UniProtKB"/>
</dbReference>
<dbReference type="GO" id="GO:0031146">
    <property type="term" value="P:SCF-dependent proteasomal ubiquitin-dependent protein catabolic process"/>
    <property type="evidence" value="ECO:0000250"/>
    <property type="project" value="UniProtKB"/>
</dbReference>
<dbReference type="CDD" id="cd20521">
    <property type="entry name" value="CYCLIN_CCNF_rpt1"/>
    <property type="match status" value="1"/>
</dbReference>
<dbReference type="CDD" id="cd22082">
    <property type="entry name" value="F-box_FBXO1"/>
    <property type="match status" value="1"/>
</dbReference>
<dbReference type="FunFam" id="1.10.472.10:FF:000038">
    <property type="entry name" value="Cyclin F"/>
    <property type="match status" value="1"/>
</dbReference>
<dbReference type="FunFam" id="1.10.472.10:FF:000055">
    <property type="entry name" value="Cyclin F"/>
    <property type="match status" value="1"/>
</dbReference>
<dbReference type="Gene3D" id="1.10.472.10">
    <property type="entry name" value="Cyclin-like"/>
    <property type="match status" value="2"/>
</dbReference>
<dbReference type="Gene3D" id="1.25.40.10">
    <property type="entry name" value="Tetratricopeptide repeat domain"/>
    <property type="match status" value="1"/>
</dbReference>
<dbReference type="InterPro" id="IPR039361">
    <property type="entry name" value="Cyclin"/>
</dbReference>
<dbReference type="InterPro" id="IPR013763">
    <property type="entry name" value="Cyclin-like_dom"/>
</dbReference>
<dbReference type="InterPro" id="IPR036915">
    <property type="entry name" value="Cyclin-like_sf"/>
</dbReference>
<dbReference type="InterPro" id="IPR004367">
    <property type="entry name" value="Cyclin_C-dom"/>
</dbReference>
<dbReference type="InterPro" id="IPR006671">
    <property type="entry name" value="Cyclin_N"/>
</dbReference>
<dbReference type="InterPro" id="IPR048258">
    <property type="entry name" value="Cyclins_cyclin-box"/>
</dbReference>
<dbReference type="InterPro" id="IPR036047">
    <property type="entry name" value="F-box-like_dom_sf"/>
</dbReference>
<dbReference type="InterPro" id="IPR001810">
    <property type="entry name" value="F-box_dom"/>
</dbReference>
<dbReference type="InterPro" id="IPR011990">
    <property type="entry name" value="TPR-like_helical_dom_sf"/>
</dbReference>
<dbReference type="PANTHER" id="PTHR10177">
    <property type="entry name" value="CYCLINS"/>
    <property type="match status" value="1"/>
</dbReference>
<dbReference type="Pfam" id="PF02984">
    <property type="entry name" value="Cyclin_C"/>
    <property type="match status" value="1"/>
</dbReference>
<dbReference type="Pfam" id="PF00134">
    <property type="entry name" value="Cyclin_N"/>
    <property type="match status" value="1"/>
</dbReference>
<dbReference type="Pfam" id="PF12937">
    <property type="entry name" value="F-box-like"/>
    <property type="match status" value="1"/>
</dbReference>
<dbReference type="SMART" id="SM00385">
    <property type="entry name" value="CYCLIN"/>
    <property type="match status" value="2"/>
</dbReference>
<dbReference type="SMART" id="SM01332">
    <property type="entry name" value="Cyclin_C"/>
    <property type="match status" value="1"/>
</dbReference>
<dbReference type="SMART" id="SM00256">
    <property type="entry name" value="FBOX"/>
    <property type="match status" value="1"/>
</dbReference>
<dbReference type="SUPFAM" id="SSF47954">
    <property type="entry name" value="Cyclin-like"/>
    <property type="match status" value="2"/>
</dbReference>
<dbReference type="SUPFAM" id="SSF81383">
    <property type="entry name" value="F-box domain"/>
    <property type="match status" value="1"/>
</dbReference>
<dbReference type="PROSITE" id="PS00292">
    <property type="entry name" value="CYCLINS"/>
    <property type="match status" value="1"/>
</dbReference>
<dbReference type="PROSITE" id="PS50181">
    <property type="entry name" value="FBOX"/>
    <property type="match status" value="1"/>
</dbReference>
<name>CCNF_RAT</name>
<reference key="1">
    <citation type="journal article" date="2004" name="Nature">
        <title>Genome sequence of the Brown Norway rat yields insights into mammalian evolution.</title>
        <authorList>
            <person name="Gibbs R.A."/>
            <person name="Weinstock G.M."/>
            <person name="Metzker M.L."/>
            <person name="Muzny D.M."/>
            <person name="Sodergren E.J."/>
            <person name="Scherer S."/>
            <person name="Scott G."/>
            <person name="Steffen D."/>
            <person name="Worley K.C."/>
            <person name="Burch P.E."/>
            <person name="Okwuonu G."/>
            <person name="Hines S."/>
            <person name="Lewis L."/>
            <person name="Deramo C."/>
            <person name="Delgado O."/>
            <person name="Dugan-Rocha S."/>
            <person name="Miner G."/>
            <person name="Morgan M."/>
            <person name="Hawes A."/>
            <person name="Gill R."/>
            <person name="Holt R.A."/>
            <person name="Adams M.D."/>
            <person name="Amanatides P.G."/>
            <person name="Baden-Tillson H."/>
            <person name="Barnstead M."/>
            <person name="Chin S."/>
            <person name="Evans C.A."/>
            <person name="Ferriera S."/>
            <person name="Fosler C."/>
            <person name="Glodek A."/>
            <person name="Gu Z."/>
            <person name="Jennings D."/>
            <person name="Kraft C.L."/>
            <person name="Nguyen T."/>
            <person name="Pfannkoch C.M."/>
            <person name="Sitter C."/>
            <person name="Sutton G.G."/>
            <person name="Venter J.C."/>
            <person name="Woodage T."/>
            <person name="Smith D."/>
            <person name="Lee H.-M."/>
            <person name="Gustafson E."/>
            <person name="Cahill P."/>
            <person name="Kana A."/>
            <person name="Doucette-Stamm L."/>
            <person name="Weinstock K."/>
            <person name="Fechtel K."/>
            <person name="Weiss R.B."/>
            <person name="Dunn D.M."/>
            <person name="Green E.D."/>
            <person name="Blakesley R.W."/>
            <person name="Bouffard G.G."/>
            <person name="De Jong P.J."/>
            <person name="Osoegawa K."/>
            <person name="Zhu B."/>
            <person name="Marra M."/>
            <person name="Schein J."/>
            <person name="Bosdet I."/>
            <person name="Fjell C."/>
            <person name="Jones S."/>
            <person name="Krzywinski M."/>
            <person name="Mathewson C."/>
            <person name="Siddiqui A."/>
            <person name="Wye N."/>
            <person name="McPherson J."/>
            <person name="Zhao S."/>
            <person name="Fraser C.M."/>
            <person name="Shetty J."/>
            <person name="Shatsman S."/>
            <person name="Geer K."/>
            <person name="Chen Y."/>
            <person name="Abramzon S."/>
            <person name="Nierman W.C."/>
            <person name="Havlak P.H."/>
            <person name="Chen R."/>
            <person name="Durbin K.J."/>
            <person name="Egan A."/>
            <person name="Ren Y."/>
            <person name="Song X.-Z."/>
            <person name="Li B."/>
            <person name="Liu Y."/>
            <person name="Qin X."/>
            <person name="Cawley S."/>
            <person name="Cooney A.J."/>
            <person name="D'Souza L.M."/>
            <person name="Martin K."/>
            <person name="Wu J.Q."/>
            <person name="Gonzalez-Garay M.L."/>
            <person name="Jackson A.R."/>
            <person name="Kalafus K.J."/>
            <person name="McLeod M.P."/>
            <person name="Milosavljevic A."/>
            <person name="Virk D."/>
            <person name="Volkov A."/>
            <person name="Wheeler D.A."/>
            <person name="Zhang Z."/>
            <person name="Bailey J.A."/>
            <person name="Eichler E.E."/>
            <person name="Tuzun E."/>
            <person name="Birney E."/>
            <person name="Mongin E."/>
            <person name="Ureta-Vidal A."/>
            <person name="Woodwark C."/>
            <person name="Zdobnov E."/>
            <person name="Bork P."/>
            <person name="Suyama M."/>
            <person name="Torrents D."/>
            <person name="Alexandersson M."/>
            <person name="Trask B.J."/>
            <person name="Young J.M."/>
            <person name="Huang H."/>
            <person name="Wang H."/>
            <person name="Xing H."/>
            <person name="Daniels S."/>
            <person name="Gietzen D."/>
            <person name="Schmidt J."/>
            <person name="Stevens K."/>
            <person name="Vitt U."/>
            <person name="Wingrove J."/>
            <person name="Camara F."/>
            <person name="Mar Alba M."/>
            <person name="Abril J.F."/>
            <person name="Guigo R."/>
            <person name="Smit A."/>
            <person name="Dubchak I."/>
            <person name="Rubin E.M."/>
            <person name="Couronne O."/>
            <person name="Poliakov A."/>
            <person name="Huebner N."/>
            <person name="Ganten D."/>
            <person name="Goesele C."/>
            <person name="Hummel O."/>
            <person name="Kreitler T."/>
            <person name="Lee Y.-A."/>
            <person name="Monti J."/>
            <person name="Schulz H."/>
            <person name="Zimdahl H."/>
            <person name="Himmelbauer H."/>
            <person name="Lehrach H."/>
            <person name="Jacob H.J."/>
            <person name="Bromberg S."/>
            <person name="Gullings-Handley J."/>
            <person name="Jensen-Seaman M.I."/>
            <person name="Kwitek A.E."/>
            <person name="Lazar J."/>
            <person name="Pasko D."/>
            <person name="Tonellato P.J."/>
            <person name="Twigger S."/>
            <person name="Ponting C.P."/>
            <person name="Duarte J.M."/>
            <person name="Rice S."/>
            <person name="Goodstadt L."/>
            <person name="Beatson S.A."/>
            <person name="Emes R.D."/>
            <person name="Winter E.E."/>
            <person name="Webber C."/>
            <person name="Brandt P."/>
            <person name="Nyakatura G."/>
            <person name="Adetobi M."/>
            <person name="Chiaromonte F."/>
            <person name="Elnitski L."/>
            <person name="Eswara P."/>
            <person name="Hardison R.C."/>
            <person name="Hou M."/>
            <person name="Kolbe D."/>
            <person name="Makova K."/>
            <person name="Miller W."/>
            <person name="Nekrutenko A."/>
            <person name="Riemer C."/>
            <person name="Schwartz S."/>
            <person name="Taylor J."/>
            <person name="Yang S."/>
            <person name="Zhang Y."/>
            <person name="Lindpaintner K."/>
            <person name="Andrews T.D."/>
            <person name="Caccamo M."/>
            <person name="Clamp M."/>
            <person name="Clarke L."/>
            <person name="Curwen V."/>
            <person name="Durbin R.M."/>
            <person name="Eyras E."/>
            <person name="Searle S.M."/>
            <person name="Cooper G.M."/>
            <person name="Batzoglou S."/>
            <person name="Brudno M."/>
            <person name="Sidow A."/>
            <person name="Stone E.A."/>
            <person name="Payseur B.A."/>
            <person name="Bourque G."/>
            <person name="Lopez-Otin C."/>
            <person name="Puente X.S."/>
            <person name="Chakrabarti K."/>
            <person name="Chatterji S."/>
            <person name="Dewey C."/>
            <person name="Pachter L."/>
            <person name="Bray N."/>
            <person name="Yap V.B."/>
            <person name="Caspi A."/>
            <person name="Tesler G."/>
            <person name="Pevzner P.A."/>
            <person name="Haussler D."/>
            <person name="Roskin K.M."/>
            <person name="Baertsch R."/>
            <person name="Clawson H."/>
            <person name="Furey T.S."/>
            <person name="Hinrichs A.S."/>
            <person name="Karolchik D."/>
            <person name="Kent W.J."/>
            <person name="Rosenbloom K.R."/>
            <person name="Trumbower H."/>
            <person name="Weirauch M."/>
            <person name="Cooper D.N."/>
            <person name="Stenson P.D."/>
            <person name="Ma B."/>
            <person name="Brent M."/>
            <person name="Arumugam M."/>
            <person name="Shteynberg D."/>
            <person name="Copley R.R."/>
            <person name="Taylor M.S."/>
            <person name="Riethman H."/>
            <person name="Mudunuri U."/>
            <person name="Peterson J."/>
            <person name="Guyer M."/>
            <person name="Felsenfeld A."/>
            <person name="Old S."/>
            <person name="Mockrin S."/>
            <person name="Collins F.S."/>
        </authorList>
    </citation>
    <scope>NUCLEOTIDE SEQUENCE [LARGE SCALE GENOMIC DNA]</scope>
    <source>
        <strain>Brown Norway</strain>
    </source>
</reference>
<reference key="2">
    <citation type="submission" date="2001-08" db="EMBL/GenBank/DDBJ databases">
        <title>Rat Cyclin F.</title>
        <authorList>
            <person name="Behboudi A."/>
            <person name="Medin C."/>
            <person name="Levan G."/>
        </authorList>
    </citation>
    <scope>NUCLEOTIDE SEQUENCE [MRNA] OF 1-747</scope>
    <source>
        <strain>Brown Norway</strain>
    </source>
</reference>